<accession>Q03AL2</accession>
<proteinExistence type="inferred from homology"/>
<dbReference type="EMBL" id="CP000423">
    <property type="protein sequence ID" value="ABJ69760.1"/>
    <property type="molecule type" value="Genomic_DNA"/>
</dbReference>
<dbReference type="RefSeq" id="WP_003564251.1">
    <property type="nucleotide sequence ID" value="NC_008526.1"/>
</dbReference>
<dbReference type="RefSeq" id="YP_806202.1">
    <property type="nucleotide sequence ID" value="NC_008526.1"/>
</dbReference>
<dbReference type="SMR" id="Q03AL2"/>
<dbReference type="STRING" id="321967.LSEI_0961"/>
<dbReference type="PaxDb" id="321967-LSEI_0961"/>
<dbReference type="GeneID" id="57089608"/>
<dbReference type="KEGG" id="lca:LSEI_0961"/>
<dbReference type="PATRIC" id="fig|321967.11.peg.931"/>
<dbReference type="HOGENOM" id="CLU_053282_1_0_9"/>
<dbReference type="Proteomes" id="UP000001651">
    <property type="component" value="Chromosome"/>
</dbReference>
<dbReference type="GO" id="GO:0003677">
    <property type="term" value="F:DNA binding"/>
    <property type="evidence" value="ECO:0007669"/>
    <property type="project" value="UniProtKB-UniRule"/>
</dbReference>
<dbReference type="GO" id="GO:0051301">
    <property type="term" value="P:cell division"/>
    <property type="evidence" value="ECO:0007669"/>
    <property type="project" value="UniProtKB-UniRule"/>
</dbReference>
<dbReference type="GO" id="GO:0043937">
    <property type="term" value="P:regulation of sporulation"/>
    <property type="evidence" value="ECO:0007669"/>
    <property type="project" value="InterPro"/>
</dbReference>
<dbReference type="Gene3D" id="3.10.28.10">
    <property type="entry name" value="Homing endonucleases"/>
    <property type="match status" value="1"/>
</dbReference>
<dbReference type="HAMAP" id="MF_01420">
    <property type="entry name" value="HTH_type_WhiA"/>
    <property type="match status" value="1"/>
</dbReference>
<dbReference type="InterPro" id="IPR027434">
    <property type="entry name" value="Homing_endonucl"/>
</dbReference>
<dbReference type="InterPro" id="IPR018478">
    <property type="entry name" value="Sporu_reg_WhiA_N_dom"/>
</dbReference>
<dbReference type="InterPro" id="IPR003802">
    <property type="entry name" value="Sporulation_regulator_WhiA"/>
</dbReference>
<dbReference type="InterPro" id="IPR023054">
    <property type="entry name" value="Sporulation_regulator_WhiA_C"/>
</dbReference>
<dbReference type="InterPro" id="IPR039518">
    <property type="entry name" value="WhiA_LAGLIDADG_dom"/>
</dbReference>
<dbReference type="NCBIfam" id="TIGR00647">
    <property type="entry name" value="DNA_bind_WhiA"/>
    <property type="match status" value="1"/>
</dbReference>
<dbReference type="PANTHER" id="PTHR37307">
    <property type="entry name" value="CELL DIVISION PROTEIN WHIA-RELATED"/>
    <property type="match status" value="1"/>
</dbReference>
<dbReference type="PANTHER" id="PTHR37307:SF1">
    <property type="entry name" value="CELL DIVISION PROTEIN WHIA-RELATED"/>
    <property type="match status" value="1"/>
</dbReference>
<dbReference type="Pfam" id="PF02650">
    <property type="entry name" value="HTH_WhiA"/>
    <property type="match status" value="1"/>
</dbReference>
<dbReference type="Pfam" id="PF14527">
    <property type="entry name" value="LAGLIDADG_WhiA"/>
    <property type="match status" value="1"/>
</dbReference>
<dbReference type="Pfam" id="PF10298">
    <property type="entry name" value="WhiA_N"/>
    <property type="match status" value="1"/>
</dbReference>
<dbReference type="SUPFAM" id="SSF55608">
    <property type="entry name" value="Homing endonucleases"/>
    <property type="match status" value="1"/>
</dbReference>
<comment type="function">
    <text evidence="1">Involved in cell division and chromosome segregation.</text>
</comment>
<comment type="similarity">
    <text evidence="1">Belongs to the WhiA family.</text>
</comment>
<gene>
    <name evidence="1" type="primary">whiA</name>
    <name type="ordered locus">LSEI_0961</name>
</gene>
<evidence type="ECO:0000255" key="1">
    <source>
        <dbReference type="HAMAP-Rule" id="MF_01420"/>
    </source>
</evidence>
<sequence length="315" mass="35815">MASFASLVKKELTQLEVHPEHAKAELSALIRMNGSLTLMAHRFVLNIQTENPAIARRIYSLIRQVYHHEANLVVHRKMKLKKNYQYIVRLTEGVNDILSDLSILDPDTMAISTTVPASVLKEPQRMRSYLRGAFLASGSVNNPETSRYHLEIYSLYDNHNAGILKMMNHFNLNARTVERRSGYIVYLKEAEKIADFLQVIGATNAMLKFEDVRIMRDMRNSVNRLVNCENANMNKTIDAAQKQIENINYLKNHVGLDNLPAKLREIAVLRLAHPDVSLQELGAMMPSGQISKSGVNHRLRKLNQIAEGYQQPEDA</sequence>
<reference key="1">
    <citation type="journal article" date="2006" name="Proc. Natl. Acad. Sci. U.S.A.">
        <title>Comparative genomics of the lactic acid bacteria.</title>
        <authorList>
            <person name="Makarova K.S."/>
            <person name="Slesarev A."/>
            <person name="Wolf Y.I."/>
            <person name="Sorokin A."/>
            <person name="Mirkin B."/>
            <person name="Koonin E.V."/>
            <person name="Pavlov A."/>
            <person name="Pavlova N."/>
            <person name="Karamychev V."/>
            <person name="Polouchine N."/>
            <person name="Shakhova V."/>
            <person name="Grigoriev I."/>
            <person name="Lou Y."/>
            <person name="Rohksar D."/>
            <person name="Lucas S."/>
            <person name="Huang K."/>
            <person name="Goodstein D.M."/>
            <person name="Hawkins T."/>
            <person name="Plengvidhya V."/>
            <person name="Welker D."/>
            <person name="Hughes J."/>
            <person name="Goh Y."/>
            <person name="Benson A."/>
            <person name="Baldwin K."/>
            <person name="Lee J.-H."/>
            <person name="Diaz-Muniz I."/>
            <person name="Dosti B."/>
            <person name="Smeianov V."/>
            <person name="Wechter W."/>
            <person name="Barabote R."/>
            <person name="Lorca G."/>
            <person name="Altermann E."/>
            <person name="Barrangou R."/>
            <person name="Ganesan B."/>
            <person name="Xie Y."/>
            <person name="Rawsthorne H."/>
            <person name="Tamir D."/>
            <person name="Parker C."/>
            <person name="Breidt F."/>
            <person name="Broadbent J.R."/>
            <person name="Hutkins R."/>
            <person name="O'Sullivan D."/>
            <person name="Steele J."/>
            <person name="Unlu G."/>
            <person name="Saier M.H. Jr."/>
            <person name="Klaenhammer T."/>
            <person name="Richardson P."/>
            <person name="Kozyavkin S."/>
            <person name="Weimer B.C."/>
            <person name="Mills D.A."/>
        </authorList>
    </citation>
    <scope>NUCLEOTIDE SEQUENCE [LARGE SCALE GENOMIC DNA]</scope>
    <source>
        <strain>ATCC 334 / BCRC 17002 / CCUG 31169 / CIP 107868 / KCTC 3260 / NRRL B-441</strain>
    </source>
</reference>
<keyword id="KW-0131">Cell cycle</keyword>
<keyword id="KW-0132">Cell division</keyword>
<keyword id="KW-0238">DNA-binding</keyword>
<keyword id="KW-1185">Reference proteome</keyword>
<feature type="chain" id="PRO_0000376495" description="Probable cell division protein WhiA">
    <location>
        <begin position="1"/>
        <end position="315"/>
    </location>
</feature>
<feature type="DNA-binding region" description="H-T-H motif" evidence="1">
    <location>
        <begin position="277"/>
        <end position="311"/>
    </location>
</feature>
<name>WHIA_LACP3</name>
<organism>
    <name type="scientific">Lacticaseibacillus paracasei (strain ATCC 334 / BCRC 17002 / CCUG 31169 / CIP 107868 / KCTC 3260 / NRRL B-441)</name>
    <name type="common">Lactobacillus paracasei</name>
    <dbReference type="NCBI Taxonomy" id="321967"/>
    <lineage>
        <taxon>Bacteria</taxon>
        <taxon>Bacillati</taxon>
        <taxon>Bacillota</taxon>
        <taxon>Bacilli</taxon>
        <taxon>Lactobacillales</taxon>
        <taxon>Lactobacillaceae</taxon>
        <taxon>Lacticaseibacillus</taxon>
    </lineage>
</organism>
<protein>
    <recommendedName>
        <fullName evidence="1">Probable cell division protein WhiA</fullName>
    </recommendedName>
</protein>